<protein>
    <recommendedName>
        <fullName evidence="1">3-deoxy-manno-octulosonate cytidylyltransferase</fullName>
        <ecNumber evidence="1">2.7.7.38</ecNumber>
    </recommendedName>
    <alternativeName>
        <fullName evidence="1">CMP-2-keto-3-deoxyoctulosonic acid synthase</fullName>
        <shortName evidence="1">CKS</shortName>
        <shortName evidence="1">CMP-KDO synthase</shortName>
    </alternativeName>
</protein>
<gene>
    <name evidence="1" type="primary">kdsB</name>
    <name type="ordered locus">CJA_1782</name>
</gene>
<reference key="1">
    <citation type="journal article" date="2008" name="J. Bacteriol.">
        <title>Insights into plant cell wall degradation from the genome sequence of the soil bacterium Cellvibrio japonicus.</title>
        <authorList>
            <person name="DeBoy R.T."/>
            <person name="Mongodin E.F."/>
            <person name="Fouts D.E."/>
            <person name="Tailford L.E."/>
            <person name="Khouri H."/>
            <person name="Emerson J.B."/>
            <person name="Mohamoud Y."/>
            <person name="Watkins K."/>
            <person name="Henrissat B."/>
            <person name="Gilbert H.J."/>
            <person name="Nelson K.E."/>
        </authorList>
    </citation>
    <scope>NUCLEOTIDE SEQUENCE [LARGE SCALE GENOMIC DNA]</scope>
    <source>
        <strain>Ueda107</strain>
    </source>
</reference>
<proteinExistence type="inferred from homology"/>
<evidence type="ECO:0000255" key="1">
    <source>
        <dbReference type="HAMAP-Rule" id="MF_00057"/>
    </source>
</evidence>
<accession>B3PFR9</accession>
<sequence length="255" mass="27741">MSFYVVIPARYASTRLPAKPLKDIAGKPMIQHVYERASQSQAKAVIIATDDARIQAVAQAFGAQVVMTSASHSSGTDRLQEVTRTLGLAADDIVVNVQGDEPLIPPAVINQVATNLAANTYASVATLSEPIHYLEDFHNPNIVKVVADKAGRALYFSRAPIPWPRDHFAKPDVNVLPDNFPAQRHIGIYSYRVALLDRFVTWPQATLESIESLEQLRVLANSEAIHVAEACAQVPGGVDTEADLQRVKALLEVGQ</sequence>
<feature type="chain" id="PRO_1000091863" description="3-deoxy-manno-octulosonate cytidylyltransferase">
    <location>
        <begin position="1"/>
        <end position="255"/>
    </location>
</feature>
<keyword id="KW-0963">Cytoplasm</keyword>
<keyword id="KW-0448">Lipopolysaccharide biosynthesis</keyword>
<keyword id="KW-0548">Nucleotidyltransferase</keyword>
<keyword id="KW-1185">Reference proteome</keyword>
<keyword id="KW-0808">Transferase</keyword>
<organism>
    <name type="scientific">Cellvibrio japonicus (strain Ueda107)</name>
    <name type="common">Pseudomonas fluorescens subsp. cellulosa</name>
    <dbReference type="NCBI Taxonomy" id="498211"/>
    <lineage>
        <taxon>Bacteria</taxon>
        <taxon>Pseudomonadati</taxon>
        <taxon>Pseudomonadota</taxon>
        <taxon>Gammaproteobacteria</taxon>
        <taxon>Cellvibrionales</taxon>
        <taxon>Cellvibrionaceae</taxon>
        <taxon>Cellvibrio</taxon>
    </lineage>
</organism>
<name>KDSB_CELJU</name>
<dbReference type="EC" id="2.7.7.38" evidence="1"/>
<dbReference type="EMBL" id="CP000934">
    <property type="protein sequence ID" value="ACE85611.1"/>
    <property type="molecule type" value="Genomic_DNA"/>
</dbReference>
<dbReference type="RefSeq" id="WP_012487402.1">
    <property type="nucleotide sequence ID" value="NC_010995.1"/>
</dbReference>
<dbReference type="SMR" id="B3PFR9"/>
<dbReference type="STRING" id="498211.CJA_1782"/>
<dbReference type="KEGG" id="cja:CJA_1782"/>
<dbReference type="eggNOG" id="COG1212">
    <property type="taxonomic scope" value="Bacteria"/>
</dbReference>
<dbReference type="HOGENOM" id="CLU_065038_1_0_6"/>
<dbReference type="OrthoDB" id="9815559at2"/>
<dbReference type="UniPathway" id="UPA00030"/>
<dbReference type="UniPathway" id="UPA00358">
    <property type="reaction ID" value="UER00476"/>
</dbReference>
<dbReference type="Proteomes" id="UP000001036">
    <property type="component" value="Chromosome"/>
</dbReference>
<dbReference type="GO" id="GO:0005829">
    <property type="term" value="C:cytosol"/>
    <property type="evidence" value="ECO:0007669"/>
    <property type="project" value="TreeGrafter"/>
</dbReference>
<dbReference type="GO" id="GO:0008690">
    <property type="term" value="F:3-deoxy-manno-octulosonate cytidylyltransferase activity"/>
    <property type="evidence" value="ECO:0007669"/>
    <property type="project" value="UniProtKB-UniRule"/>
</dbReference>
<dbReference type="GO" id="GO:0033468">
    <property type="term" value="P:CMP-keto-3-deoxy-D-manno-octulosonic acid biosynthetic process"/>
    <property type="evidence" value="ECO:0007669"/>
    <property type="project" value="UniProtKB-UniRule"/>
</dbReference>
<dbReference type="GO" id="GO:0009103">
    <property type="term" value="P:lipopolysaccharide biosynthetic process"/>
    <property type="evidence" value="ECO:0007669"/>
    <property type="project" value="UniProtKB-UniRule"/>
</dbReference>
<dbReference type="CDD" id="cd02517">
    <property type="entry name" value="CMP-KDO-Synthetase"/>
    <property type="match status" value="1"/>
</dbReference>
<dbReference type="FunFam" id="3.90.550.10:FF:000011">
    <property type="entry name" value="3-deoxy-manno-octulosonate cytidylyltransferase"/>
    <property type="match status" value="1"/>
</dbReference>
<dbReference type="Gene3D" id="3.90.550.10">
    <property type="entry name" value="Spore Coat Polysaccharide Biosynthesis Protein SpsA, Chain A"/>
    <property type="match status" value="1"/>
</dbReference>
<dbReference type="HAMAP" id="MF_00057">
    <property type="entry name" value="KdsB"/>
    <property type="match status" value="1"/>
</dbReference>
<dbReference type="InterPro" id="IPR003329">
    <property type="entry name" value="Cytidylyl_trans"/>
</dbReference>
<dbReference type="InterPro" id="IPR004528">
    <property type="entry name" value="KdsB"/>
</dbReference>
<dbReference type="InterPro" id="IPR029044">
    <property type="entry name" value="Nucleotide-diphossugar_trans"/>
</dbReference>
<dbReference type="NCBIfam" id="TIGR00466">
    <property type="entry name" value="kdsB"/>
    <property type="match status" value="1"/>
</dbReference>
<dbReference type="NCBIfam" id="NF003950">
    <property type="entry name" value="PRK05450.1-3"/>
    <property type="match status" value="1"/>
</dbReference>
<dbReference type="NCBIfam" id="NF003952">
    <property type="entry name" value="PRK05450.1-5"/>
    <property type="match status" value="1"/>
</dbReference>
<dbReference type="NCBIfam" id="NF009905">
    <property type="entry name" value="PRK13368.1"/>
    <property type="match status" value="1"/>
</dbReference>
<dbReference type="PANTHER" id="PTHR42866">
    <property type="entry name" value="3-DEOXY-MANNO-OCTULOSONATE CYTIDYLYLTRANSFERASE"/>
    <property type="match status" value="1"/>
</dbReference>
<dbReference type="PANTHER" id="PTHR42866:SF2">
    <property type="entry name" value="3-DEOXY-MANNO-OCTULOSONATE CYTIDYLYLTRANSFERASE, MITOCHONDRIAL"/>
    <property type="match status" value="1"/>
</dbReference>
<dbReference type="Pfam" id="PF02348">
    <property type="entry name" value="CTP_transf_3"/>
    <property type="match status" value="1"/>
</dbReference>
<dbReference type="SUPFAM" id="SSF53448">
    <property type="entry name" value="Nucleotide-diphospho-sugar transferases"/>
    <property type="match status" value="1"/>
</dbReference>
<comment type="function">
    <text evidence="1">Activates KDO (a required 8-carbon sugar) for incorporation into bacterial lipopolysaccharide in Gram-negative bacteria.</text>
</comment>
<comment type="catalytic activity">
    <reaction evidence="1">
        <text>3-deoxy-alpha-D-manno-oct-2-ulosonate + CTP = CMP-3-deoxy-beta-D-manno-octulosonate + diphosphate</text>
        <dbReference type="Rhea" id="RHEA:23448"/>
        <dbReference type="ChEBI" id="CHEBI:33019"/>
        <dbReference type="ChEBI" id="CHEBI:37563"/>
        <dbReference type="ChEBI" id="CHEBI:85986"/>
        <dbReference type="ChEBI" id="CHEBI:85987"/>
        <dbReference type="EC" id="2.7.7.38"/>
    </reaction>
</comment>
<comment type="pathway">
    <text evidence="1">Nucleotide-sugar biosynthesis; CMP-3-deoxy-D-manno-octulosonate biosynthesis; CMP-3-deoxy-D-manno-octulosonate from 3-deoxy-D-manno-octulosonate and CTP: step 1/1.</text>
</comment>
<comment type="pathway">
    <text evidence="1">Bacterial outer membrane biogenesis; lipopolysaccharide biosynthesis.</text>
</comment>
<comment type="subcellular location">
    <subcellularLocation>
        <location evidence="1">Cytoplasm</location>
    </subcellularLocation>
</comment>
<comment type="similarity">
    <text evidence="1">Belongs to the KdsB family.</text>
</comment>